<gene>
    <name evidence="14" type="primary">Akap1</name>
    <name type="synonym">Akap</name>
</gene>
<proteinExistence type="evidence at protein level"/>
<reference key="1">
    <citation type="journal article" date="1997" name="J. Biol. Chem.">
        <title>Identification of a novel protein kinase A anchoring protein that binds both type I and type II regulatory subunits.</title>
        <authorList>
            <person name="Huang L.J.-S."/>
            <person name="Durick K."/>
            <person name="Weiner J.A."/>
            <person name="Chun J."/>
            <person name="Taylor S.S."/>
        </authorList>
    </citation>
    <scope>NUCLEOTIDE SEQUENCE [MRNA] (ISOFORMS 1; 2; 3 AND 4)</scope>
    <scope>TISSUE SPECIFICITY</scope>
    <scope>FUNCTION</scope>
    <source>
        <tissue>Embryo</tissue>
    </source>
</reference>
<reference key="2">
    <citation type="submission" date="1998-07" db="EMBL/GenBank/DDBJ databases">
        <authorList>
            <person name="Huang L.J.-S."/>
            <person name="Durick K."/>
            <person name="Taylor S.S."/>
        </authorList>
    </citation>
    <scope>SEQUENCE REVISION</scope>
</reference>
<reference key="3">
    <citation type="journal article" date="1997" name="J. Biol. Chem.">
        <title>Organelle-specific targeting of protein kinase AII (PKAII). Molecular and in situ characterization of murine A kinase anchor proteins that recruit regulatory subunits of PKAII to the cytoplasmic surface of mitochondria.</title>
        <authorList>
            <person name="Chen Q."/>
            <person name="Lin R.-Y."/>
            <person name="Rubin C.S."/>
        </authorList>
    </citation>
    <scope>NUCLEOTIDE SEQUENCE [MRNA] (ISOFORMS 3; 5 AND 6)</scope>
    <scope>SUBCELLULAR LOCATION</scope>
    <scope>FUNCTION</scope>
    <source>
        <strain>BALB/cJ</strain>
        <tissue>Testis</tissue>
    </source>
</reference>
<reference key="4">
    <citation type="journal article" date="2009" name="PLoS Biol.">
        <title>Lineage-specific biology revealed by a finished genome assembly of the mouse.</title>
        <authorList>
            <person name="Church D.M."/>
            <person name="Goodstadt L."/>
            <person name="Hillier L.W."/>
            <person name="Zody M.C."/>
            <person name="Goldstein S."/>
            <person name="She X."/>
            <person name="Bult C.J."/>
            <person name="Agarwala R."/>
            <person name="Cherry J.L."/>
            <person name="DiCuccio M."/>
            <person name="Hlavina W."/>
            <person name="Kapustin Y."/>
            <person name="Meric P."/>
            <person name="Maglott D."/>
            <person name="Birtle Z."/>
            <person name="Marques A.C."/>
            <person name="Graves T."/>
            <person name="Zhou S."/>
            <person name="Teague B."/>
            <person name="Potamousis K."/>
            <person name="Churas C."/>
            <person name="Place M."/>
            <person name="Herschleb J."/>
            <person name="Runnheim R."/>
            <person name="Forrest D."/>
            <person name="Amos-Landgraf J."/>
            <person name="Schwartz D.C."/>
            <person name="Cheng Z."/>
            <person name="Lindblad-Toh K."/>
            <person name="Eichler E.E."/>
            <person name="Ponting C.P."/>
        </authorList>
    </citation>
    <scope>NUCLEOTIDE SEQUENCE [LARGE SCALE GENOMIC DNA]</scope>
    <source>
        <strain>C57BL/6J</strain>
    </source>
</reference>
<reference key="5">
    <citation type="journal article" date="1999" name="J. Cell Biol.">
        <title>NH2-Terminal targeting motifs direct dual specificity A-kinase-anchoring protein 1 (D-AKAP1) to either mitochondria or endoplasmic reticulum.</title>
        <authorList>
            <person name="Huang L.J.-S."/>
            <person name="Wang L."/>
            <person name="Ma Y."/>
            <person name="Durick K."/>
            <person name="Perkins G."/>
            <person name="Deerinck T.J."/>
            <person name="Ellisman M.H."/>
            <person name="Taylor S.S."/>
        </authorList>
    </citation>
    <scope>SUBCELLULAR LOCATION (ISOFORMS 1; 2; 3; 4; 5 AND 6)</scope>
</reference>
<reference key="6">
    <citation type="journal article" date="2007" name="Proc. Natl. Acad. Sci. U.S.A.">
        <title>Large-scale phosphorylation analysis of mouse liver.</title>
        <authorList>
            <person name="Villen J."/>
            <person name="Beausoleil S.A."/>
            <person name="Gerber S.A."/>
            <person name="Gygi S.P."/>
        </authorList>
    </citation>
    <scope>PHOSPHORYLATION [LARGE SCALE ANALYSIS] AT SER-55; SER-101 AND SER-103</scope>
    <scope>IDENTIFICATION BY MASS SPECTROMETRY [LARGE SCALE ANALYSIS]</scope>
    <source>
        <tissue>Liver</tissue>
    </source>
</reference>
<reference key="7">
    <citation type="journal article" date="2008" name="J. Proteome Res.">
        <title>Specific phosphopeptide enrichment with immobilized titanium ion affinity chromatography adsorbent for phosphoproteome analysis.</title>
        <authorList>
            <person name="Zhou H."/>
            <person name="Ye M."/>
            <person name="Dong J."/>
            <person name="Han G."/>
            <person name="Jiang X."/>
            <person name="Wu R."/>
            <person name="Zou H."/>
        </authorList>
    </citation>
    <scope>PHOSPHORYLATION [LARGE SCALE ANALYSIS] AT SER-55</scope>
    <scope>IDENTIFICATION BY MASS SPECTROMETRY [LARGE SCALE ANALYSIS]</scope>
    <source>
        <tissue>Liver</tissue>
    </source>
</reference>
<reference key="8">
    <citation type="journal article" date="2010" name="Cell">
        <title>A tissue-specific atlas of mouse protein phosphorylation and expression.</title>
        <authorList>
            <person name="Huttlin E.L."/>
            <person name="Jedrychowski M.P."/>
            <person name="Elias J.E."/>
            <person name="Goswami T."/>
            <person name="Rad R."/>
            <person name="Beausoleil S.A."/>
            <person name="Villen J."/>
            <person name="Haas W."/>
            <person name="Sowa M.E."/>
            <person name="Gygi S.P."/>
        </authorList>
    </citation>
    <scope>PHOSPHORYLATION [LARGE SCALE ANALYSIS] AT SER-55; SER-101 AND SER-103</scope>
    <scope>IDENTIFICATION BY MASS SPECTROMETRY [LARGE SCALE ANALYSIS]</scope>
    <source>
        <tissue>Brain</tissue>
        <tissue>Brown adipose tissue</tissue>
        <tissue>Heart</tissue>
        <tissue>Kidney</tissue>
        <tissue>Liver</tissue>
        <tissue>Lung</tissue>
        <tissue>Pancreas</tissue>
        <tissue>Spleen</tissue>
        <tissue>Testis</tissue>
    </source>
</reference>
<reference key="9">
    <citation type="journal article" date="2013" name="J. Cell Sci.">
        <title>NCX3 regulates mitochondrial Ca(2+) handling through the AKAP121-anchored signaling complex and prevents hypoxia-induced neuronal death.</title>
        <authorList>
            <person name="Scorziello A."/>
            <person name="Savoia C."/>
            <person name="Sisalli M.J."/>
            <person name="Adornetto A."/>
            <person name="Secondo A."/>
            <person name="Boscia F."/>
            <person name="Esposito A."/>
            <person name="Polishchuk E.V."/>
            <person name="Polishchuk R.S."/>
            <person name="Molinaro P."/>
            <person name="Carlucci A."/>
            <person name="Lignitto L."/>
            <person name="Di Renzo G."/>
            <person name="Feliciello A."/>
            <person name="Annunziato L."/>
        </authorList>
    </citation>
    <scope>SUBCELLULAR LOCATION</scope>
    <scope>INTERACTION WITH SLC8A3</scope>
</reference>
<reference key="10">
    <citation type="journal article" date="2020" name="Diabetologia">
        <title>Akap1 deficiency exacerbates diabetic cardiomyopathy in mice by NDUFS1-mediated mitochondrial dysfunction and apoptosis.</title>
        <authorList>
            <person name="Qi B."/>
            <person name="He L."/>
            <person name="Zhao Y."/>
            <person name="Zhang L."/>
            <person name="He Y."/>
            <person name="Li J."/>
            <person name="Li C."/>
            <person name="Zhang B."/>
            <person name="Huang Q."/>
            <person name="Xing J."/>
            <person name="Li F."/>
            <person name="Li Y."/>
            <person name="Ji L."/>
        </authorList>
    </citation>
    <scope>FUNCTION</scope>
    <scope>SUBCELLULAR LOCATION</scope>
    <scope>INTERACTION WITH NDUFS1</scope>
    <scope>TISSUE SPECIFICITY</scope>
    <scope>DISRUPTION PHENOTYPE</scope>
</reference>
<evidence type="ECO:0000250" key="1"/>
<evidence type="ECO:0000250" key="2">
    <source>
        <dbReference type="UniProtKB" id="Q92667"/>
    </source>
</evidence>
<evidence type="ECO:0000255" key="3">
    <source>
        <dbReference type="PROSITE-ProRule" id="PRU00117"/>
    </source>
</evidence>
<evidence type="ECO:0000255" key="4">
    <source>
        <dbReference type="PROSITE-ProRule" id="PRU00211"/>
    </source>
</evidence>
<evidence type="ECO:0000256" key="5">
    <source>
        <dbReference type="SAM" id="MobiDB-lite"/>
    </source>
</evidence>
<evidence type="ECO:0000269" key="6">
    <source>
    </source>
</evidence>
<evidence type="ECO:0000269" key="7">
    <source>
    </source>
</evidence>
<evidence type="ECO:0000269" key="8">
    <source>
    </source>
</evidence>
<evidence type="ECO:0000269" key="9">
    <source>
    </source>
</evidence>
<evidence type="ECO:0000269" key="10">
    <source>
    </source>
</evidence>
<evidence type="ECO:0000303" key="11">
    <source>
    </source>
</evidence>
<evidence type="ECO:0000303" key="12">
    <source>
    </source>
</evidence>
<evidence type="ECO:0000305" key="13"/>
<evidence type="ECO:0000312" key="14">
    <source>
        <dbReference type="MGI" id="MGI:104729"/>
    </source>
</evidence>
<evidence type="ECO:0007744" key="15">
    <source>
    </source>
</evidence>
<evidence type="ECO:0007744" key="16">
    <source>
    </source>
</evidence>
<evidence type="ECO:0007744" key="17">
    <source>
    </source>
</evidence>
<dbReference type="EMBL" id="U84389">
    <property type="protein sequence ID" value="AAC27100.1"/>
    <property type="molecule type" value="mRNA"/>
</dbReference>
<dbReference type="EMBL" id="U95145">
    <property type="protein sequence ID" value="AAB53740.1"/>
    <property type="molecule type" value="mRNA"/>
</dbReference>
<dbReference type="EMBL" id="U95146">
    <property type="protein sequence ID" value="AAB53741.1"/>
    <property type="molecule type" value="mRNA"/>
</dbReference>
<dbReference type="EMBL" id="AL596180">
    <property type="status" value="NOT_ANNOTATED_CDS"/>
    <property type="molecule type" value="Genomic_DNA"/>
</dbReference>
<dbReference type="CCDS" id="CCDS25229.1">
    <molecule id="O08715-1"/>
</dbReference>
<dbReference type="RefSeq" id="NP_001036006.1">
    <molecule id="O08715-1"/>
    <property type="nucleotide sequence ID" value="NM_001042541.1"/>
</dbReference>
<dbReference type="RefSeq" id="NP_033778.2">
    <molecule id="O08715-1"/>
    <property type="nucleotide sequence ID" value="NM_009648.2"/>
</dbReference>
<dbReference type="SMR" id="O08715"/>
<dbReference type="BioGRID" id="198048">
    <property type="interactions" value="4"/>
</dbReference>
<dbReference type="FunCoup" id="O08715">
    <property type="interactions" value="418"/>
</dbReference>
<dbReference type="IntAct" id="O08715">
    <property type="interactions" value="5"/>
</dbReference>
<dbReference type="MINT" id="O08715"/>
<dbReference type="STRING" id="10090.ENSMUSP00000018572"/>
<dbReference type="GlyGen" id="O08715">
    <property type="glycosylation" value="1 site, 1 O-linked glycan (1 site)"/>
</dbReference>
<dbReference type="iPTMnet" id="O08715"/>
<dbReference type="PhosphoSitePlus" id="O08715"/>
<dbReference type="SwissPalm" id="O08715"/>
<dbReference type="jPOST" id="O08715"/>
<dbReference type="PaxDb" id="10090-ENSMUSP00000018572"/>
<dbReference type="PeptideAtlas" id="O08715"/>
<dbReference type="ProteomicsDB" id="296383">
    <molecule id="O08715-1"/>
</dbReference>
<dbReference type="ProteomicsDB" id="296384">
    <molecule id="O08715-2"/>
</dbReference>
<dbReference type="ProteomicsDB" id="296385">
    <molecule id="O08715-3"/>
</dbReference>
<dbReference type="ProteomicsDB" id="296386">
    <molecule id="O08715-4"/>
</dbReference>
<dbReference type="ProteomicsDB" id="296387">
    <molecule id="O08715-5"/>
</dbReference>
<dbReference type="ProteomicsDB" id="296388">
    <molecule id="O08715-6"/>
</dbReference>
<dbReference type="Pumba" id="O08715"/>
<dbReference type="Antibodypedia" id="2388">
    <property type="antibodies" value="182 antibodies from 33 providers"/>
</dbReference>
<dbReference type="DNASU" id="11640"/>
<dbReference type="Ensembl" id="ENSMUST00000018572.11">
    <molecule id="O08715-1"/>
    <property type="protein sequence ID" value="ENSMUSP00000018572.5"/>
    <property type="gene ID" value="ENSMUSG00000018428.16"/>
</dbReference>
<dbReference type="Ensembl" id="ENSMUST00000107903.8">
    <molecule id="O08715-1"/>
    <property type="protein sequence ID" value="ENSMUSP00000103536.2"/>
    <property type="gene ID" value="ENSMUSG00000018428.16"/>
</dbReference>
<dbReference type="Ensembl" id="ENSMUST00000107904.3">
    <molecule id="O08715-4"/>
    <property type="protein sequence ID" value="ENSMUSP00000103537.3"/>
    <property type="gene ID" value="ENSMUSG00000018428.16"/>
</dbReference>
<dbReference type="Ensembl" id="ENSMUST00000143720.8">
    <molecule id="O08715-5"/>
    <property type="protein sequence ID" value="ENSMUSP00000122295.2"/>
    <property type="gene ID" value="ENSMUSG00000018428.16"/>
</dbReference>
<dbReference type="GeneID" id="11640"/>
<dbReference type="KEGG" id="mmu:11640"/>
<dbReference type="UCSC" id="uc007kvu.2">
    <molecule id="O08715-1"/>
    <property type="organism name" value="mouse"/>
</dbReference>
<dbReference type="AGR" id="MGI:104729"/>
<dbReference type="CTD" id="8165"/>
<dbReference type="MGI" id="MGI:104729">
    <property type="gene designation" value="Akap1"/>
</dbReference>
<dbReference type="VEuPathDB" id="HostDB:ENSMUSG00000018428"/>
<dbReference type="eggNOG" id="KOG2279">
    <property type="taxonomic scope" value="Eukaryota"/>
</dbReference>
<dbReference type="GeneTree" id="ENSGT00390000001360"/>
<dbReference type="HOGENOM" id="CLU_016731_0_0_1"/>
<dbReference type="InParanoid" id="O08715"/>
<dbReference type="OMA" id="CLTNIYT"/>
<dbReference type="OrthoDB" id="77509at9989"/>
<dbReference type="TreeFam" id="TF105401"/>
<dbReference type="Reactome" id="R-MMU-983231">
    <property type="pathway name" value="Factors involved in megakaryocyte development and platelet production"/>
</dbReference>
<dbReference type="BioGRID-ORCS" id="11640">
    <property type="hits" value="3 hits in 81 CRISPR screens"/>
</dbReference>
<dbReference type="CD-CODE" id="CE726F99">
    <property type="entry name" value="Postsynaptic density"/>
</dbReference>
<dbReference type="ChiTaRS" id="Akap1">
    <property type="organism name" value="mouse"/>
</dbReference>
<dbReference type="PRO" id="PR:O08715"/>
<dbReference type="Proteomes" id="UP000000589">
    <property type="component" value="Chromosome 11"/>
</dbReference>
<dbReference type="RNAct" id="O08715">
    <property type="molecule type" value="protein"/>
</dbReference>
<dbReference type="Bgee" id="ENSMUSG00000018428">
    <property type="expression patterns" value="Expressed in seminiferous tubule of testis and 241 other cell types or tissues"/>
</dbReference>
<dbReference type="ExpressionAtlas" id="O08715">
    <property type="expression patterns" value="baseline and differential"/>
</dbReference>
<dbReference type="GO" id="GO:0005783">
    <property type="term" value="C:endoplasmic reticulum"/>
    <property type="evidence" value="ECO:0007669"/>
    <property type="project" value="UniProtKB-SubCell"/>
</dbReference>
<dbReference type="GO" id="GO:0005741">
    <property type="term" value="C:mitochondrial outer membrane"/>
    <property type="evidence" value="ECO:0000304"/>
    <property type="project" value="Reactome"/>
</dbReference>
<dbReference type="GO" id="GO:0005739">
    <property type="term" value="C:mitochondrion"/>
    <property type="evidence" value="ECO:0000314"/>
    <property type="project" value="UniProtKB"/>
</dbReference>
<dbReference type="GO" id="GO:0034237">
    <property type="term" value="F:protein kinase A regulatory subunit binding"/>
    <property type="evidence" value="ECO:0007669"/>
    <property type="project" value="Ensembl"/>
</dbReference>
<dbReference type="GO" id="GO:0003723">
    <property type="term" value="F:RNA binding"/>
    <property type="evidence" value="ECO:0007669"/>
    <property type="project" value="UniProtKB-KW"/>
</dbReference>
<dbReference type="GO" id="GO:0140374">
    <property type="term" value="P:antiviral innate immune response"/>
    <property type="evidence" value="ECO:0000250"/>
    <property type="project" value="UniProtKB"/>
</dbReference>
<dbReference type="GO" id="GO:0006915">
    <property type="term" value="P:apoptotic process"/>
    <property type="evidence" value="ECO:0000315"/>
    <property type="project" value="UniProtKB"/>
</dbReference>
<dbReference type="CDD" id="cd22395">
    <property type="entry name" value="KH-I_AKAP1"/>
    <property type="match status" value="1"/>
</dbReference>
<dbReference type="CDD" id="cd20407">
    <property type="entry name" value="Tudor_AKAP1"/>
    <property type="match status" value="1"/>
</dbReference>
<dbReference type="FunFam" id="2.30.30.140:FF:000066">
    <property type="entry name" value="A-kinase anchor protein 1, mitochondrial"/>
    <property type="match status" value="1"/>
</dbReference>
<dbReference type="FunFam" id="3.30.1370.10:FF:000063">
    <property type="entry name" value="A-kinase anchor protein 1, mitochondrial"/>
    <property type="match status" value="1"/>
</dbReference>
<dbReference type="Gene3D" id="2.30.30.140">
    <property type="match status" value="1"/>
</dbReference>
<dbReference type="Gene3D" id="2.40.50.90">
    <property type="match status" value="1"/>
</dbReference>
<dbReference type="Gene3D" id="3.30.1370.10">
    <property type="entry name" value="K Homology domain, type 1"/>
    <property type="match status" value="1"/>
</dbReference>
<dbReference type="InterPro" id="IPR047368">
    <property type="entry name" value="KH-I_AKAP1"/>
</dbReference>
<dbReference type="InterPro" id="IPR004087">
    <property type="entry name" value="KH_dom"/>
</dbReference>
<dbReference type="InterPro" id="IPR004088">
    <property type="entry name" value="KH_dom_type_1"/>
</dbReference>
<dbReference type="InterPro" id="IPR036612">
    <property type="entry name" value="KH_dom_type_1_sf"/>
</dbReference>
<dbReference type="InterPro" id="IPR035437">
    <property type="entry name" value="SNase_OB-fold_sf"/>
</dbReference>
<dbReference type="InterPro" id="IPR002999">
    <property type="entry name" value="Tudor"/>
</dbReference>
<dbReference type="InterPro" id="IPR047367">
    <property type="entry name" value="Tudor_AKAP1"/>
</dbReference>
<dbReference type="InterPro" id="IPR050621">
    <property type="entry name" value="Tudor_domain_containing"/>
</dbReference>
<dbReference type="PANTHER" id="PTHR22948:SF75">
    <property type="entry name" value="A-KINASE ANCHOR PROTEIN 1, MITOCHONDRIAL"/>
    <property type="match status" value="1"/>
</dbReference>
<dbReference type="PANTHER" id="PTHR22948">
    <property type="entry name" value="TUDOR DOMAIN CONTAINING PROTEIN"/>
    <property type="match status" value="1"/>
</dbReference>
<dbReference type="Pfam" id="PF00013">
    <property type="entry name" value="KH_1"/>
    <property type="match status" value="1"/>
</dbReference>
<dbReference type="Pfam" id="PF00567">
    <property type="entry name" value="TUDOR"/>
    <property type="match status" value="1"/>
</dbReference>
<dbReference type="SMART" id="SM00322">
    <property type="entry name" value="KH"/>
    <property type="match status" value="1"/>
</dbReference>
<dbReference type="SMART" id="SM00333">
    <property type="entry name" value="TUDOR"/>
    <property type="match status" value="1"/>
</dbReference>
<dbReference type="SUPFAM" id="SSF54791">
    <property type="entry name" value="Eukaryotic type KH-domain (KH-domain type I)"/>
    <property type="match status" value="1"/>
</dbReference>
<dbReference type="SUPFAM" id="SSF63748">
    <property type="entry name" value="Tudor/PWWP/MBT"/>
    <property type="match status" value="1"/>
</dbReference>
<dbReference type="PROSITE" id="PS50084">
    <property type="entry name" value="KH_TYPE_1"/>
    <property type="match status" value="1"/>
</dbReference>
<dbReference type="PROSITE" id="PS50304">
    <property type="entry name" value="TUDOR"/>
    <property type="match status" value="1"/>
</dbReference>
<sequence length="857" mass="92195">MAIQLRSLFPLALPGMLALLGWWWFFSRKKDRLSSSDKQVETLKVGPAIKDRRLSEEACPGVLSVAPTVTQPPGREEQRCVDKPSTEPLALPRTRQVRRRSESSGNLPSVADTRSQPGPCRDEIAKVELSLMGDKAKSIPLGCPLLPKDASFPYEAVERCKQESALGKTPGRGWPSPYAASGEKARETGGTEGTGDAVLGENVSEEGLLSQECVSEVEKSEFPILAPGGGEGEEVSHGPPQVAELLKKEEYIVGKLPSSFVEPVHSEPVKDEDALEPQVKGSSNTSDRDLAGELDKDETVPENDQIKQAAFQLISQVILEATEEFRATTVGKTVAQVHPTSATQPKGKEESCVPASQETSLGQDTSDPASTRTGATASPSAEALPPKTYVSCLSSPLSGPTKDQKPKNSAHHISLAPCPPPVTPQRQSLEGASNPRGDDNFVACMANNSQSVLSVSSLGQCSDPVSTSGLEDSCTETISSSGDKAMTPPLPVSTQPFSNGVLKEELSDLGTEDGWTMDTEADHSGGSDGNSMDSVDSCCGLTKPDSPQSVQAGSNPKKVDLIIWEIEVPKHLVGRLIGKQGRYVSFLKQTSGAKIYISTLPYTQNIQICHIEGSQHHVDKALNLIGKKFKELNLTNIYAPPLPSLALPSLPMTSWLMLPDGITVEVIVVNQVNAGHLFVQQHTHPTFHALRSLDQQMYLCYSQPGIPTLPTPVEITVICAAPGADGAWWRAQVVASYEETNEVEIRYVDYGGYKRVKVDVLRQIRSDFVTLPFQGAEVLLDSVVPLSDDDHFSPEADAAMSEMTGNTALLAQVTSYSATGLPLIQLWSVVGDEVVLINRSLVERGLAQWVDSYYASL</sequence>
<name>AKAP1_MOUSE</name>
<accession>O08715</accession>
<accession>B1AR25</accession>
<accession>O08714</accession>
<accession>P97488</accession>
<comment type="function">
    <text evidence="2 8 9 10">Differentially targeted protein that binds to type I and II regulatory subunits of protein kinase A (PubMed:9065479, PubMed:9182549). Anchors them to the cytoplasmic face of the mitochondrial outer membrane or allows them to reside in the endoplasmic reticulum (PubMed:9065479, PubMed:9182549). Involved in mitochondrial-mediated antiviral innate immunity (By similarity). Promotes translocation of NDUFS1 into mitochondria to regulate mitochondrial membrane respiratory chain NADH dehydrogenase (Complex I) activity (PubMed:32072193). Under diabetic conditions, myocardial AKAP1 expression decreases which blocks the translocation of NDUFS1 from the cytosol to mitochondria (PubMed:32072193). Reduction of NDUFS1 in mitochondria decreases ATP production and increases mitochondrial ROS level, which causes mitochondrial dysfunction and cell apoptosis, respectively, thereby leading to cardiac dysfunction (PubMed:32072193).</text>
</comment>
<comment type="subunit">
    <text evidence="2 7 8">Interacts with SLC8A3 (PubMed:24101730). Interacts with CFAP91. Interacts with CLPB (By similarity). Interacts with NDUFS1 (PubMed:32072193).</text>
</comment>
<comment type="interaction">
    <interactant intactId="EBI-7838029">
        <id>O08715</id>
    </interactant>
    <interactant intactId="EBI-957413">
        <id>Q06986</id>
        <label>Siah2</label>
    </interactant>
    <organismsDiffer>false</organismsDiffer>
    <experiments>6</experiments>
</comment>
<comment type="interaction">
    <interactant intactId="EBI-9117988">
        <id>O08715-5</id>
    </interactant>
    <interactant intactId="EBI-2860264">
        <id>Q16825</id>
        <label>PTPN21</label>
    </interactant>
    <organismsDiffer>true</organismsDiffer>
    <experiments>2</experiments>
</comment>
<comment type="subcellular location">
    <subcellularLocation>
        <location evidence="7 10">Mitochondrion outer membrane</location>
    </subcellularLocation>
    <subcellularLocation>
        <location evidence="8">Mitochondrion</location>
    </subcellularLocation>
</comment>
<comment type="subcellular location">
    <molecule>Isoform 2</molecule>
    <subcellularLocation>
        <location evidence="6">Endoplasmic reticulum</location>
    </subcellularLocation>
    <text evidence="6">Does not contain the classic KDEL endoplasmic reticulum-targeting sequence. This explains how it is able to switch its localization, either being in the endoplasmic reticulum or in the mitochondria depending on which N-terminal part begins the isoform. The longest N-terminal part only present in isoform 2 acts as a suppressor of mitochondrial targeting and as an activator of recessive endoplasmic reticulum targeting motif.</text>
</comment>
<comment type="subcellular location">
    <molecule>Isoform 4</molecule>
    <subcellularLocation>
        <location evidence="6">Endoplasmic reticulum</location>
    </subcellularLocation>
    <text evidence="6">Does not contain the classic KDEL endoplasmic reticulum-targeting sequence. This explains how it is able to switch its localization, either being in the endoplasmic reticulum or in the mitochondria depending on which N-terminal part begins the isoform. The longest N-terminal part only present in isoform 4 acts as a suppressor of mitochondrial targeting and as an activator of recessive endoplasmic reticulum targeting motif.</text>
</comment>
<comment type="subcellular location">
    <molecule>Isoform 1</molecule>
    <subcellularLocation>
        <location evidence="6">Mitochondrion outer membrane</location>
    </subcellularLocation>
    <text evidence="6">Does not contain the classic KDEL endoplasmic reticulum-targeting sequence. This explains how it is able to switch its localization, either being in the endoplasmic reticulum or in the mitochondria depending on which N-terminal part begins the isoform.</text>
</comment>
<comment type="subcellular location">
    <molecule>Isoform 3</molecule>
    <subcellularLocation>
        <location evidence="6">Mitochondrion outer membrane</location>
    </subcellularLocation>
    <text evidence="6">Does not contain the classic KDEL endoplasmic reticulum-targeting sequence. This explains how it is able to switch its localization, either being in the endoplasmic reticulum or in the mitochondria depending on which N-terminal part begins the isoform.</text>
</comment>
<comment type="subcellular location">
    <molecule>Isoform 5</molecule>
    <subcellularLocation>
        <location evidence="6">Mitochondrion outer membrane</location>
    </subcellularLocation>
    <text evidence="6">Does not contain the classic KDEL endoplasmic reticulum-targeting sequence. This explains how it is able to switch its localization, either being in the endoplasmic reticulum or in the mitochondria depending on which N-terminal part begins the isoform.</text>
</comment>
<comment type="subcellular location">
    <molecule>Isoform 6</molecule>
    <subcellularLocation>
        <location evidence="6">Mitochondrion outer membrane</location>
    </subcellularLocation>
    <text evidence="6">Does not contain the classic KDEL endoplasmic reticulum-targeting sequence. This explains how it is able to switch its localization, either being in the endoplasmic reticulum or in the mitochondria depending on which N-terminal part begins the isoform.</text>
</comment>
<comment type="alternative products">
    <event type="alternative splicing"/>
    <isoform>
        <id>O08715-1</id>
        <name>3</name>
        <name>D-AKAP1C</name>
        <name>AKAP121</name>
        <sequence type="displayed"/>
    </isoform>
    <isoform>
        <id>O08715-2</id>
        <name>1</name>
        <name>D-AKAP1A</name>
        <sequence type="described" ref="VSP_002848 VSP_002849"/>
    </isoform>
    <isoform>
        <id>O08715-3</id>
        <name>2</name>
        <name>D-AKAP1B</name>
        <sequence type="described" ref="VSP_002847 VSP_002848 VSP_002849"/>
    </isoform>
    <isoform>
        <id>O08715-4</id>
        <name>4</name>
        <name>D-AKAP1D</name>
        <sequence type="described" ref="VSP_002847"/>
    </isoform>
    <isoform>
        <id>O08715-5</id>
        <name>5</name>
        <name>S-AKAP84</name>
        <sequence type="described" ref="VSP_002850 VSP_002851"/>
    </isoform>
    <isoform>
        <id>O08715-6</id>
        <name>6</name>
        <name>AKAP100</name>
        <sequence type="described" ref="VSP_002852 VSP_002853"/>
    </isoform>
</comment>
<comment type="tissue specificity">
    <text evidence="8 9">Highest expression in testis, heart, liver, skeletal muscle, intestine and kidney, followed by brain and lung. No expression in spleen. Isoform 1/D-AKAP1A is expressed predominantly in testis whereas isoform 4/D-AKAP1D is expressed primarily in liver (PubMed:9065479). Expression is decreased in hearts of diabetic mice (at protein level) (PubMed:32072193).</text>
</comment>
<comment type="domain">
    <text>RII-alpha binding site, predicted to form an amphipathic helix, could participate in protein-protein interactions with a complementary surface on the R-subunit dimer.</text>
</comment>
<comment type="disruption phenotype">
    <text evidence="8">Knockout in diabetogenic agent streptozotocin-treated mice results in significant cardiac dysfunction which is accompanied by impaired mitochondrial function and increased cardiomyocyte apoptosis.</text>
</comment>
<feature type="transit peptide" description="Mitochondrion" evidence="1">
    <location>
        <begin position="1"/>
        <end position="29"/>
    </location>
</feature>
<feature type="chain" id="PRO_0000016660" description="A-kinase anchor protein 1, mitochondrial">
    <location>
        <begin position="30"/>
        <end position="857"/>
    </location>
</feature>
<feature type="domain" description="KH" evidence="3">
    <location>
        <begin position="561"/>
        <end position="625"/>
    </location>
</feature>
<feature type="domain" description="Tudor" evidence="4">
    <location>
        <begin position="712"/>
        <end position="771"/>
    </location>
</feature>
<feature type="region of interest" description="Disordered" evidence="5">
    <location>
        <begin position="65"/>
        <end position="121"/>
    </location>
</feature>
<feature type="region of interest" description="Disordered" evidence="5">
    <location>
        <begin position="165"/>
        <end position="198"/>
    </location>
</feature>
<feature type="region of interest" description="Disordered" evidence="5">
    <location>
        <begin position="260"/>
        <end position="303"/>
    </location>
</feature>
<feature type="region of interest" description="PKA-RII subunit binding domain">
    <location>
        <begin position="306"/>
        <end position="319"/>
    </location>
</feature>
<feature type="region of interest" description="Disordered" evidence="5">
    <location>
        <begin position="336"/>
        <end position="437"/>
    </location>
</feature>
<feature type="region of interest" description="Disordered" evidence="5">
    <location>
        <begin position="466"/>
        <end position="497"/>
    </location>
</feature>
<feature type="region of interest" description="Disordered" evidence="5">
    <location>
        <begin position="512"/>
        <end position="554"/>
    </location>
</feature>
<feature type="compositionally biased region" description="Basic and acidic residues" evidence="5">
    <location>
        <begin position="74"/>
        <end position="85"/>
    </location>
</feature>
<feature type="compositionally biased region" description="Polar residues" evidence="5">
    <location>
        <begin position="103"/>
        <end position="116"/>
    </location>
</feature>
<feature type="compositionally biased region" description="Basic and acidic residues" evidence="5">
    <location>
        <begin position="286"/>
        <end position="299"/>
    </location>
</feature>
<feature type="compositionally biased region" description="Polar residues" evidence="5">
    <location>
        <begin position="354"/>
        <end position="379"/>
    </location>
</feature>
<feature type="compositionally biased region" description="Polar residues" evidence="5">
    <location>
        <begin position="466"/>
        <end position="482"/>
    </location>
</feature>
<feature type="compositionally biased region" description="Polar residues" evidence="5">
    <location>
        <begin position="545"/>
        <end position="554"/>
    </location>
</feature>
<feature type="modified residue" description="Phosphoserine" evidence="15 16 17">
    <location>
        <position position="55"/>
    </location>
</feature>
<feature type="modified residue" description="Phosphoserine" evidence="15 17">
    <location>
        <position position="101"/>
    </location>
</feature>
<feature type="modified residue" description="Phosphoserine" evidence="15 17">
    <location>
        <position position="103"/>
    </location>
</feature>
<feature type="modified residue" description="Phosphoserine" evidence="2">
    <location>
        <position position="164"/>
    </location>
</feature>
<feature type="modified residue" description="Phosphothreonine" evidence="2">
    <location>
        <position position="401"/>
    </location>
</feature>
<feature type="modified residue" description="Phosphothreonine" evidence="2">
    <location>
        <position position="487"/>
    </location>
</feature>
<feature type="modified residue" description="Phosphoserine" evidence="2">
    <location>
        <position position="527"/>
    </location>
</feature>
<feature type="modified residue" description="Phosphoserine" evidence="2">
    <location>
        <position position="546"/>
    </location>
</feature>
<feature type="splice variant" id="VSP_002847" description="In isoform 2 and isoform 4." evidence="11">
    <original>M</original>
    <variation>MGCKTGPKPFGGGETIRPIRIRRCSYFTSTDSKM</variation>
    <location>
        <position position="1"/>
    </location>
</feature>
<feature type="splice variant" id="VSP_002850" description="In isoform 5." evidence="12">
    <original>GSDGNSMDSVDSCCGLTKPDSP</original>
    <variation>VAAPPQERGHFGNGGCTGFFEC</variation>
    <location>
        <begin position="526"/>
        <end position="547"/>
    </location>
</feature>
<feature type="splice variant" id="VSP_002848" description="In isoform 1 and isoform 2." evidence="11">
    <original>SDGNSMDSVDSCCGLTKP</original>
    <variation>RKVLGCFLGESGRGPIIC</variation>
    <location>
        <begin position="527"/>
        <end position="544"/>
    </location>
</feature>
<feature type="splice variant" id="VSP_002849" description="In isoform 1 and isoform 2." evidence="11">
    <location>
        <begin position="545"/>
        <end position="857"/>
    </location>
</feature>
<feature type="splice variant" id="VSP_002851" description="In isoform 5." evidence="12">
    <location>
        <begin position="548"/>
        <end position="857"/>
    </location>
</feature>
<feature type="splice variant" id="VSP_002852" description="In isoform 6." evidence="12">
    <original>SQHHVDKALNLIGKKFKELNLTNI</original>
    <variation>CVSVLTRRLSAPCRQSSELDWEEV</variation>
    <location>
        <begin position="614"/>
        <end position="637"/>
    </location>
</feature>
<feature type="splice variant" id="VSP_002853" description="In isoform 6." evidence="12">
    <location>
        <begin position="638"/>
        <end position="857"/>
    </location>
</feature>
<feature type="sequence conflict" description="In Ref. 2; AAC27100 and 3; AAB53740/AAB53741." evidence="13" ref="2 3">
    <original>C</original>
    <variation>S</variation>
    <location>
        <position position="80"/>
    </location>
</feature>
<feature type="sequence conflict" description="In Ref. 2; AAC27100." evidence="13" ref="2">
    <original>S</original>
    <variation>I</variation>
    <location>
        <position position="220"/>
    </location>
</feature>
<feature type="sequence conflict" description="In Ref. 2; AAC27100 and 3; AAB53740/AAB53741." evidence="13" ref="2 3">
    <original>F</original>
    <variation>L</variation>
    <location>
        <position position="325"/>
    </location>
</feature>
<feature type="sequence conflict" description="In Ref. 3; AAB53740/AAB53741." evidence="13" ref="3">
    <original>A</original>
    <variation>P</variation>
    <location>
        <position position="327"/>
    </location>
</feature>
<feature type="sequence conflict" description="In Ref. 2; AAC27100 and 3; AAB53740/AAB53741." evidence="13" ref="2 3">
    <original>T</original>
    <variation>I</variation>
    <location>
        <position position="340"/>
    </location>
</feature>
<feature type="sequence conflict" description="In Ref. 2; AAC27100 and 3; AAB53740/AAB53741." evidence="13" ref="2 3">
    <original>M</original>
    <variation>I</variation>
    <location>
        <position position="486"/>
    </location>
</feature>
<organism>
    <name type="scientific">Mus musculus</name>
    <name type="common">Mouse</name>
    <dbReference type="NCBI Taxonomy" id="10090"/>
    <lineage>
        <taxon>Eukaryota</taxon>
        <taxon>Metazoa</taxon>
        <taxon>Chordata</taxon>
        <taxon>Craniata</taxon>
        <taxon>Vertebrata</taxon>
        <taxon>Euteleostomi</taxon>
        <taxon>Mammalia</taxon>
        <taxon>Eutheria</taxon>
        <taxon>Euarchontoglires</taxon>
        <taxon>Glires</taxon>
        <taxon>Rodentia</taxon>
        <taxon>Myomorpha</taxon>
        <taxon>Muroidea</taxon>
        <taxon>Muridae</taxon>
        <taxon>Murinae</taxon>
        <taxon>Mus</taxon>
        <taxon>Mus</taxon>
    </lineage>
</organism>
<keyword id="KW-0025">Alternative splicing</keyword>
<keyword id="KW-0256">Endoplasmic reticulum</keyword>
<keyword id="KW-0472">Membrane</keyword>
<keyword id="KW-0496">Mitochondrion</keyword>
<keyword id="KW-1000">Mitochondrion outer membrane</keyword>
<keyword id="KW-0597">Phosphoprotein</keyword>
<keyword id="KW-1185">Reference proteome</keyword>
<keyword id="KW-0694">RNA-binding</keyword>
<keyword id="KW-0809">Transit peptide</keyword>
<keyword id="KW-0812">Transmembrane</keyword>
<protein>
    <recommendedName>
        <fullName>A-kinase anchor protein 1, mitochondrial</fullName>
    </recommendedName>
    <alternativeName>
        <fullName>Dual specificity A-kinase-anchoring protein 1</fullName>
        <shortName>D-AKAP-1</shortName>
    </alternativeName>
    <alternativeName>
        <fullName>Protein kinase A-anchoring protein 1</fullName>
        <shortName>PRKA1</shortName>
    </alternativeName>
    <alternativeName>
        <fullName>Spermatid A-kinase anchor protein</fullName>
        <shortName>S-AKAP</shortName>
    </alternativeName>
</protein>